<organism>
    <name type="scientific">Escherichia coli O45:K1 (strain S88 / ExPEC)</name>
    <dbReference type="NCBI Taxonomy" id="585035"/>
    <lineage>
        <taxon>Bacteria</taxon>
        <taxon>Pseudomonadati</taxon>
        <taxon>Pseudomonadota</taxon>
        <taxon>Gammaproteobacteria</taxon>
        <taxon>Enterobacterales</taxon>
        <taxon>Enterobacteriaceae</taxon>
        <taxon>Escherichia</taxon>
    </lineage>
</organism>
<comment type="function">
    <text evidence="1">Binds directly to 23S rRNA. The L1 stalk is quite mobile in the ribosome, and is involved in E site tRNA release.</text>
</comment>
<comment type="function">
    <text evidence="1">Protein L1 is also a translational repressor protein, it controls the translation of the L11 operon by binding to its mRNA.</text>
</comment>
<comment type="subunit">
    <text evidence="1">Part of the 50S ribosomal subunit.</text>
</comment>
<comment type="similarity">
    <text evidence="1">Belongs to the universal ribosomal protein uL1 family.</text>
</comment>
<dbReference type="EMBL" id="CU928161">
    <property type="protein sequence ID" value="CAR05614.1"/>
    <property type="molecule type" value="Genomic_DNA"/>
</dbReference>
<dbReference type="RefSeq" id="WP_001096684.1">
    <property type="nucleotide sequence ID" value="NC_011742.1"/>
</dbReference>
<dbReference type="EMDB" id="EMD-20056"/>
<dbReference type="EMDB" id="EMD-20057"/>
<dbReference type="EMDB" id="EMD-20058"/>
<dbReference type="EMDB" id="EMD-26486"/>
<dbReference type="EMDB" id="EMD-43490"/>
<dbReference type="EMDB" id="EMD-43491"/>
<dbReference type="EMDB" id="EMD-7970"/>
<dbReference type="EMDB" id="EMD-8522"/>
<dbReference type="SMR" id="B7MIX0"/>
<dbReference type="IntAct" id="B7MIX0">
    <property type="interactions" value="1"/>
</dbReference>
<dbReference type="GeneID" id="93777910"/>
<dbReference type="KEGG" id="ecz:ECS88_4445"/>
<dbReference type="HOGENOM" id="CLU_062853_0_0_6"/>
<dbReference type="Proteomes" id="UP000000747">
    <property type="component" value="Chromosome"/>
</dbReference>
<dbReference type="GO" id="GO:0022625">
    <property type="term" value="C:cytosolic large ribosomal subunit"/>
    <property type="evidence" value="ECO:0007669"/>
    <property type="project" value="TreeGrafter"/>
</dbReference>
<dbReference type="GO" id="GO:0019843">
    <property type="term" value="F:rRNA binding"/>
    <property type="evidence" value="ECO:0007669"/>
    <property type="project" value="UniProtKB-UniRule"/>
</dbReference>
<dbReference type="GO" id="GO:0003735">
    <property type="term" value="F:structural constituent of ribosome"/>
    <property type="evidence" value="ECO:0007669"/>
    <property type="project" value="InterPro"/>
</dbReference>
<dbReference type="GO" id="GO:0000049">
    <property type="term" value="F:tRNA binding"/>
    <property type="evidence" value="ECO:0007669"/>
    <property type="project" value="UniProtKB-KW"/>
</dbReference>
<dbReference type="GO" id="GO:0006417">
    <property type="term" value="P:regulation of translation"/>
    <property type="evidence" value="ECO:0007669"/>
    <property type="project" value="UniProtKB-KW"/>
</dbReference>
<dbReference type="GO" id="GO:0006412">
    <property type="term" value="P:translation"/>
    <property type="evidence" value="ECO:0007669"/>
    <property type="project" value="UniProtKB-UniRule"/>
</dbReference>
<dbReference type="CDD" id="cd00403">
    <property type="entry name" value="Ribosomal_L1"/>
    <property type="match status" value="1"/>
</dbReference>
<dbReference type="FunFam" id="3.40.50.790:FF:000001">
    <property type="entry name" value="50S ribosomal protein L1"/>
    <property type="match status" value="1"/>
</dbReference>
<dbReference type="Gene3D" id="3.30.190.20">
    <property type="match status" value="1"/>
</dbReference>
<dbReference type="Gene3D" id="3.40.50.790">
    <property type="match status" value="1"/>
</dbReference>
<dbReference type="HAMAP" id="MF_01318_B">
    <property type="entry name" value="Ribosomal_uL1_B"/>
    <property type="match status" value="1"/>
</dbReference>
<dbReference type="InterPro" id="IPR005878">
    <property type="entry name" value="Ribosom_uL1_bac-type"/>
</dbReference>
<dbReference type="InterPro" id="IPR002143">
    <property type="entry name" value="Ribosomal_uL1"/>
</dbReference>
<dbReference type="InterPro" id="IPR023674">
    <property type="entry name" value="Ribosomal_uL1-like"/>
</dbReference>
<dbReference type="InterPro" id="IPR028364">
    <property type="entry name" value="Ribosomal_uL1/biogenesis"/>
</dbReference>
<dbReference type="InterPro" id="IPR016095">
    <property type="entry name" value="Ribosomal_uL1_3-a/b-sand"/>
</dbReference>
<dbReference type="InterPro" id="IPR023673">
    <property type="entry name" value="Ribosomal_uL1_CS"/>
</dbReference>
<dbReference type="NCBIfam" id="TIGR01169">
    <property type="entry name" value="rplA_bact"/>
    <property type="match status" value="1"/>
</dbReference>
<dbReference type="PANTHER" id="PTHR36427">
    <property type="entry name" value="54S RIBOSOMAL PROTEIN L1, MITOCHONDRIAL"/>
    <property type="match status" value="1"/>
</dbReference>
<dbReference type="PANTHER" id="PTHR36427:SF3">
    <property type="entry name" value="LARGE RIBOSOMAL SUBUNIT PROTEIN UL1M"/>
    <property type="match status" value="1"/>
</dbReference>
<dbReference type="Pfam" id="PF00687">
    <property type="entry name" value="Ribosomal_L1"/>
    <property type="match status" value="1"/>
</dbReference>
<dbReference type="PIRSF" id="PIRSF002155">
    <property type="entry name" value="Ribosomal_L1"/>
    <property type="match status" value="1"/>
</dbReference>
<dbReference type="SUPFAM" id="SSF56808">
    <property type="entry name" value="Ribosomal protein L1"/>
    <property type="match status" value="1"/>
</dbReference>
<dbReference type="PROSITE" id="PS01199">
    <property type="entry name" value="RIBOSOMAL_L1"/>
    <property type="match status" value="1"/>
</dbReference>
<proteinExistence type="inferred from homology"/>
<keyword id="KW-1185">Reference proteome</keyword>
<keyword id="KW-0678">Repressor</keyword>
<keyword id="KW-0687">Ribonucleoprotein</keyword>
<keyword id="KW-0689">Ribosomal protein</keyword>
<keyword id="KW-0694">RNA-binding</keyword>
<keyword id="KW-0699">rRNA-binding</keyword>
<keyword id="KW-0810">Translation regulation</keyword>
<keyword id="KW-0820">tRNA-binding</keyword>
<protein>
    <recommendedName>
        <fullName evidence="1">Large ribosomal subunit protein uL1</fullName>
    </recommendedName>
    <alternativeName>
        <fullName evidence="2">50S ribosomal protein L1</fullName>
    </alternativeName>
</protein>
<feature type="chain" id="PRO_1000141396" description="Large ribosomal subunit protein uL1">
    <location>
        <begin position="1"/>
        <end position="234"/>
    </location>
</feature>
<name>RL1_ECO45</name>
<accession>B7MIX0</accession>
<sequence length="234" mass="24730">MAKLTKRMRVIREKVDATKQYDINEAIALLKELATAKFVESVDVAVNLGIDARKSDQNVRGATVLPHGTGRSVRVAVFTQGANAEAAKAAGAELVGMEDLADQIKKGEMNFDVVIASPDAMRVVGQLGQVLGPRGLMPNPKVGTVTPNVAEAVKNAKAGQVRYRNDKNGIIHTTIGKVDFDADKLKENLEALLVALKKAKPTQAKGVYIKKVSISTTMGAGVAVDQAGLSASVN</sequence>
<gene>
    <name evidence="1" type="primary">rplA</name>
    <name type="ordered locus">ECS88_4445</name>
</gene>
<reference key="1">
    <citation type="journal article" date="2009" name="PLoS Genet.">
        <title>Organised genome dynamics in the Escherichia coli species results in highly diverse adaptive paths.</title>
        <authorList>
            <person name="Touchon M."/>
            <person name="Hoede C."/>
            <person name="Tenaillon O."/>
            <person name="Barbe V."/>
            <person name="Baeriswyl S."/>
            <person name="Bidet P."/>
            <person name="Bingen E."/>
            <person name="Bonacorsi S."/>
            <person name="Bouchier C."/>
            <person name="Bouvet O."/>
            <person name="Calteau A."/>
            <person name="Chiapello H."/>
            <person name="Clermont O."/>
            <person name="Cruveiller S."/>
            <person name="Danchin A."/>
            <person name="Diard M."/>
            <person name="Dossat C."/>
            <person name="Karoui M.E."/>
            <person name="Frapy E."/>
            <person name="Garry L."/>
            <person name="Ghigo J.M."/>
            <person name="Gilles A.M."/>
            <person name="Johnson J."/>
            <person name="Le Bouguenec C."/>
            <person name="Lescat M."/>
            <person name="Mangenot S."/>
            <person name="Martinez-Jehanne V."/>
            <person name="Matic I."/>
            <person name="Nassif X."/>
            <person name="Oztas S."/>
            <person name="Petit M.A."/>
            <person name="Pichon C."/>
            <person name="Rouy Z."/>
            <person name="Ruf C.S."/>
            <person name="Schneider D."/>
            <person name="Tourret J."/>
            <person name="Vacherie B."/>
            <person name="Vallenet D."/>
            <person name="Medigue C."/>
            <person name="Rocha E.P.C."/>
            <person name="Denamur E."/>
        </authorList>
    </citation>
    <scope>NUCLEOTIDE SEQUENCE [LARGE SCALE GENOMIC DNA]</scope>
    <source>
        <strain>S88 / ExPEC</strain>
    </source>
</reference>
<evidence type="ECO:0000255" key="1">
    <source>
        <dbReference type="HAMAP-Rule" id="MF_01318"/>
    </source>
</evidence>
<evidence type="ECO:0000305" key="2"/>